<feature type="chain" id="PRO_1000063187" description="1-(5-phosphoribosyl)-5-[(5-phosphoribosylamino)methylideneamino] imidazole-4-carboxamide isomerase">
    <location>
        <begin position="1"/>
        <end position="247"/>
    </location>
</feature>
<feature type="active site" description="Proton acceptor" evidence="1">
    <location>
        <position position="8"/>
    </location>
</feature>
<feature type="active site" description="Proton donor" evidence="1">
    <location>
        <position position="129"/>
    </location>
</feature>
<organism>
    <name type="scientific">Bradyrhizobium sp. (strain BTAi1 / ATCC BAA-1182)</name>
    <dbReference type="NCBI Taxonomy" id="288000"/>
    <lineage>
        <taxon>Bacteria</taxon>
        <taxon>Pseudomonadati</taxon>
        <taxon>Pseudomonadota</taxon>
        <taxon>Alphaproteobacteria</taxon>
        <taxon>Hyphomicrobiales</taxon>
        <taxon>Nitrobacteraceae</taxon>
        <taxon>Bradyrhizobium</taxon>
    </lineage>
</organism>
<comment type="catalytic activity">
    <reaction evidence="1">
        <text>1-(5-phospho-beta-D-ribosyl)-5-[(5-phospho-beta-D-ribosylamino)methylideneamino]imidazole-4-carboxamide = 5-[(5-phospho-1-deoxy-D-ribulos-1-ylimino)methylamino]-1-(5-phospho-beta-D-ribosyl)imidazole-4-carboxamide</text>
        <dbReference type="Rhea" id="RHEA:15469"/>
        <dbReference type="ChEBI" id="CHEBI:58435"/>
        <dbReference type="ChEBI" id="CHEBI:58525"/>
        <dbReference type="EC" id="5.3.1.16"/>
    </reaction>
</comment>
<comment type="pathway">
    <text evidence="1">Amino-acid biosynthesis; L-histidine biosynthesis; L-histidine from 5-phospho-alpha-D-ribose 1-diphosphate: step 4/9.</text>
</comment>
<comment type="subcellular location">
    <subcellularLocation>
        <location evidence="1">Cytoplasm</location>
    </subcellularLocation>
</comment>
<comment type="similarity">
    <text evidence="1">Belongs to the HisA/HisF family.</text>
</comment>
<reference key="1">
    <citation type="journal article" date="2007" name="Science">
        <title>Legumes symbioses: absence of nod genes in photosynthetic bradyrhizobia.</title>
        <authorList>
            <person name="Giraud E."/>
            <person name="Moulin L."/>
            <person name="Vallenet D."/>
            <person name="Barbe V."/>
            <person name="Cytryn E."/>
            <person name="Avarre J.-C."/>
            <person name="Jaubert M."/>
            <person name="Simon D."/>
            <person name="Cartieaux F."/>
            <person name="Prin Y."/>
            <person name="Bena G."/>
            <person name="Hannibal L."/>
            <person name="Fardoux J."/>
            <person name="Kojadinovic M."/>
            <person name="Vuillet L."/>
            <person name="Lajus A."/>
            <person name="Cruveiller S."/>
            <person name="Rouy Z."/>
            <person name="Mangenot S."/>
            <person name="Segurens B."/>
            <person name="Dossat C."/>
            <person name="Franck W.L."/>
            <person name="Chang W.-S."/>
            <person name="Saunders E."/>
            <person name="Bruce D."/>
            <person name="Richardson P."/>
            <person name="Normand P."/>
            <person name="Dreyfus B."/>
            <person name="Pignol D."/>
            <person name="Stacey G."/>
            <person name="Emerich D."/>
            <person name="Vermeglio A."/>
            <person name="Medigue C."/>
            <person name="Sadowsky M."/>
        </authorList>
    </citation>
    <scope>NUCLEOTIDE SEQUENCE [LARGE SCALE GENOMIC DNA]</scope>
    <source>
        <strain>BTAi1 / ATCC BAA-1182</strain>
    </source>
</reference>
<keyword id="KW-0028">Amino-acid biosynthesis</keyword>
<keyword id="KW-0963">Cytoplasm</keyword>
<keyword id="KW-0368">Histidine biosynthesis</keyword>
<keyword id="KW-0413">Isomerase</keyword>
<keyword id="KW-1185">Reference proteome</keyword>
<sequence length="247" mass="25858">MILFPAIDLKNGQCVRLEQGDMARATVFNLDPAAQAKSFADQGFDYLHVVDLDGAFAGKPMNAQAVEAMLKVVKMPVQLGGGIRDLKTVEAWLNKGITRVIIGTAAVRDPELVKTAAKAFPGRVAVGLDARDGKVAVEGWAETSEVTALDIAKRFEDAGVAAIIFTDIARDGLLKGLNLDATIALGDAVSIPVIASGGLASIEDVKAMLTPRARKLEGAIAGRALYDGRLDPAEALALIRAARKAGA</sequence>
<accession>A5E8E8</accession>
<proteinExistence type="inferred from homology"/>
<gene>
    <name evidence="1" type="primary">hisA</name>
    <name type="ordered locus">BBta_0145</name>
</gene>
<evidence type="ECO:0000255" key="1">
    <source>
        <dbReference type="HAMAP-Rule" id="MF_01014"/>
    </source>
</evidence>
<dbReference type="EC" id="5.3.1.16" evidence="1"/>
<dbReference type="EMBL" id="CP000494">
    <property type="protein sequence ID" value="ABQ32442.1"/>
    <property type="molecule type" value="Genomic_DNA"/>
</dbReference>
<dbReference type="RefSeq" id="WP_011942664.1">
    <property type="nucleotide sequence ID" value="NC_009485.1"/>
</dbReference>
<dbReference type="SMR" id="A5E8E8"/>
<dbReference type="STRING" id="288000.BBta_0145"/>
<dbReference type="KEGG" id="bbt:BBta_0145"/>
<dbReference type="eggNOG" id="COG0106">
    <property type="taxonomic scope" value="Bacteria"/>
</dbReference>
<dbReference type="HOGENOM" id="CLU_048577_1_1_5"/>
<dbReference type="OrthoDB" id="9807749at2"/>
<dbReference type="UniPathway" id="UPA00031">
    <property type="reaction ID" value="UER00009"/>
</dbReference>
<dbReference type="Proteomes" id="UP000000246">
    <property type="component" value="Chromosome"/>
</dbReference>
<dbReference type="GO" id="GO:0005737">
    <property type="term" value="C:cytoplasm"/>
    <property type="evidence" value="ECO:0007669"/>
    <property type="project" value="UniProtKB-SubCell"/>
</dbReference>
<dbReference type="GO" id="GO:0003949">
    <property type="term" value="F:1-(5-phosphoribosyl)-5-[(5-phosphoribosylamino)methylideneamino]imidazole-4-carboxamide isomerase activity"/>
    <property type="evidence" value="ECO:0007669"/>
    <property type="project" value="UniProtKB-UniRule"/>
</dbReference>
<dbReference type="GO" id="GO:0000105">
    <property type="term" value="P:L-histidine biosynthetic process"/>
    <property type="evidence" value="ECO:0007669"/>
    <property type="project" value="UniProtKB-UniRule"/>
</dbReference>
<dbReference type="GO" id="GO:0000162">
    <property type="term" value="P:L-tryptophan biosynthetic process"/>
    <property type="evidence" value="ECO:0007669"/>
    <property type="project" value="TreeGrafter"/>
</dbReference>
<dbReference type="CDD" id="cd04732">
    <property type="entry name" value="HisA"/>
    <property type="match status" value="1"/>
</dbReference>
<dbReference type="FunFam" id="3.20.20.70:FF:000009">
    <property type="entry name" value="1-(5-phosphoribosyl)-5-[(5-phosphoribosylamino)methylideneamino] imidazole-4-carboxamide isomerase"/>
    <property type="match status" value="1"/>
</dbReference>
<dbReference type="Gene3D" id="3.20.20.70">
    <property type="entry name" value="Aldolase class I"/>
    <property type="match status" value="1"/>
</dbReference>
<dbReference type="HAMAP" id="MF_01014">
    <property type="entry name" value="HisA"/>
    <property type="match status" value="1"/>
</dbReference>
<dbReference type="InterPro" id="IPR013785">
    <property type="entry name" value="Aldolase_TIM"/>
</dbReference>
<dbReference type="InterPro" id="IPR006062">
    <property type="entry name" value="His_biosynth"/>
</dbReference>
<dbReference type="InterPro" id="IPR006063">
    <property type="entry name" value="HisA_bact_arch"/>
</dbReference>
<dbReference type="InterPro" id="IPR044524">
    <property type="entry name" value="Isoase_HisA-like"/>
</dbReference>
<dbReference type="InterPro" id="IPR023016">
    <property type="entry name" value="Isoase_HisA-like_bact"/>
</dbReference>
<dbReference type="InterPro" id="IPR011060">
    <property type="entry name" value="RibuloseP-bd_barrel"/>
</dbReference>
<dbReference type="NCBIfam" id="TIGR00007">
    <property type="entry name" value="1-(5-phosphoribosyl)-5-[(5-phosphoribosylamino)methylideneamino]imidazole-4-carboxamide isomerase"/>
    <property type="match status" value="1"/>
</dbReference>
<dbReference type="NCBIfam" id="NF010112">
    <property type="entry name" value="PRK13585.1"/>
    <property type="match status" value="1"/>
</dbReference>
<dbReference type="PANTHER" id="PTHR43090">
    <property type="entry name" value="1-(5-PHOSPHORIBOSYL)-5-[(5-PHOSPHORIBOSYLAMINO)METHYLIDENEAMINO] IMIDAZOLE-4-CARBOXAMIDE ISOMERASE"/>
    <property type="match status" value="1"/>
</dbReference>
<dbReference type="PANTHER" id="PTHR43090:SF2">
    <property type="entry name" value="1-(5-PHOSPHORIBOSYL)-5-[(5-PHOSPHORIBOSYLAMINO)METHYLIDENEAMINO] IMIDAZOLE-4-CARBOXAMIDE ISOMERASE"/>
    <property type="match status" value="1"/>
</dbReference>
<dbReference type="Pfam" id="PF00977">
    <property type="entry name" value="His_biosynth"/>
    <property type="match status" value="1"/>
</dbReference>
<dbReference type="SUPFAM" id="SSF51366">
    <property type="entry name" value="Ribulose-phoshate binding barrel"/>
    <property type="match status" value="1"/>
</dbReference>
<name>HIS4_BRASB</name>
<protein>
    <recommendedName>
        <fullName evidence="1">1-(5-phosphoribosyl)-5-[(5-phosphoribosylamino)methylideneamino] imidazole-4-carboxamide isomerase</fullName>
        <ecNumber evidence="1">5.3.1.16</ecNumber>
    </recommendedName>
    <alternativeName>
        <fullName evidence="1">Phosphoribosylformimino-5-aminoimidazole carboxamide ribotide isomerase</fullName>
    </alternativeName>
</protein>